<keyword id="KW-0030">Aminoacyl-tRNA synthetase</keyword>
<keyword id="KW-0067">ATP-binding</keyword>
<keyword id="KW-0175">Coiled coil</keyword>
<keyword id="KW-0963">Cytoplasm</keyword>
<keyword id="KW-0436">Ligase</keyword>
<keyword id="KW-0547">Nucleotide-binding</keyword>
<keyword id="KW-0648">Protein biosynthesis</keyword>
<gene>
    <name evidence="1" type="primary">valS</name>
    <name type="ordered locus">VV1_1474</name>
</gene>
<accession>Q8DCE7</accession>
<dbReference type="EC" id="6.1.1.9" evidence="1"/>
<dbReference type="EMBL" id="AE016795">
    <property type="protein sequence ID" value="AAO09913.1"/>
    <property type="molecule type" value="Genomic_DNA"/>
</dbReference>
<dbReference type="RefSeq" id="WP_011079431.1">
    <property type="nucleotide sequence ID" value="NC_004459.3"/>
</dbReference>
<dbReference type="SMR" id="Q8DCE7"/>
<dbReference type="KEGG" id="vvu:VV1_1474"/>
<dbReference type="HOGENOM" id="CLU_001493_0_2_6"/>
<dbReference type="Proteomes" id="UP000002275">
    <property type="component" value="Chromosome 1"/>
</dbReference>
<dbReference type="GO" id="GO:0005829">
    <property type="term" value="C:cytosol"/>
    <property type="evidence" value="ECO:0007669"/>
    <property type="project" value="TreeGrafter"/>
</dbReference>
<dbReference type="GO" id="GO:0002161">
    <property type="term" value="F:aminoacyl-tRNA deacylase activity"/>
    <property type="evidence" value="ECO:0007669"/>
    <property type="project" value="InterPro"/>
</dbReference>
<dbReference type="GO" id="GO:0005524">
    <property type="term" value="F:ATP binding"/>
    <property type="evidence" value="ECO:0007669"/>
    <property type="project" value="UniProtKB-UniRule"/>
</dbReference>
<dbReference type="GO" id="GO:0004832">
    <property type="term" value="F:valine-tRNA ligase activity"/>
    <property type="evidence" value="ECO:0007669"/>
    <property type="project" value="UniProtKB-UniRule"/>
</dbReference>
<dbReference type="GO" id="GO:0006438">
    <property type="term" value="P:valyl-tRNA aminoacylation"/>
    <property type="evidence" value="ECO:0007669"/>
    <property type="project" value="UniProtKB-UniRule"/>
</dbReference>
<dbReference type="CDD" id="cd07962">
    <property type="entry name" value="Anticodon_Ia_Val"/>
    <property type="match status" value="1"/>
</dbReference>
<dbReference type="CDD" id="cd00817">
    <property type="entry name" value="ValRS_core"/>
    <property type="match status" value="1"/>
</dbReference>
<dbReference type="FunFam" id="1.10.287.380:FF:000001">
    <property type="entry name" value="Valine--tRNA ligase"/>
    <property type="match status" value="1"/>
</dbReference>
<dbReference type="FunFam" id="1.10.730.10:FF:000007">
    <property type="entry name" value="Valine--tRNA ligase"/>
    <property type="match status" value="1"/>
</dbReference>
<dbReference type="FunFam" id="3.40.50.620:FF:000146">
    <property type="entry name" value="Valine--tRNA ligase"/>
    <property type="match status" value="1"/>
</dbReference>
<dbReference type="FunFam" id="3.90.740.10:FF:000003">
    <property type="entry name" value="Valine--tRNA ligase"/>
    <property type="match status" value="1"/>
</dbReference>
<dbReference type="FunFam" id="3.90.740.10:FF:000004">
    <property type="entry name" value="Valine--tRNA ligase"/>
    <property type="match status" value="1"/>
</dbReference>
<dbReference type="FunFam" id="3.40.50.620:FF:000020">
    <property type="entry name" value="Valine--tRNA ligase, mitochondrial"/>
    <property type="match status" value="1"/>
</dbReference>
<dbReference type="Gene3D" id="3.40.50.620">
    <property type="entry name" value="HUPs"/>
    <property type="match status" value="2"/>
</dbReference>
<dbReference type="Gene3D" id="1.10.730.10">
    <property type="entry name" value="Isoleucyl-tRNA Synthetase, Domain 1"/>
    <property type="match status" value="1"/>
</dbReference>
<dbReference type="Gene3D" id="1.10.287.380">
    <property type="entry name" value="Valyl-tRNA synthetase, C-terminal domain"/>
    <property type="match status" value="1"/>
</dbReference>
<dbReference type="Gene3D" id="3.90.740.10">
    <property type="entry name" value="Valyl/Leucyl/Isoleucyl-tRNA synthetase, editing domain"/>
    <property type="match status" value="1"/>
</dbReference>
<dbReference type="HAMAP" id="MF_02004">
    <property type="entry name" value="Val_tRNA_synth_type1"/>
    <property type="match status" value="1"/>
</dbReference>
<dbReference type="InterPro" id="IPR001412">
    <property type="entry name" value="aa-tRNA-synth_I_CS"/>
</dbReference>
<dbReference type="InterPro" id="IPR002300">
    <property type="entry name" value="aa-tRNA-synth_Ia"/>
</dbReference>
<dbReference type="InterPro" id="IPR033705">
    <property type="entry name" value="Anticodon_Ia_Val"/>
</dbReference>
<dbReference type="InterPro" id="IPR013155">
    <property type="entry name" value="M/V/L/I-tRNA-synth_anticd-bd"/>
</dbReference>
<dbReference type="InterPro" id="IPR014729">
    <property type="entry name" value="Rossmann-like_a/b/a_fold"/>
</dbReference>
<dbReference type="InterPro" id="IPR010978">
    <property type="entry name" value="tRNA-bd_arm"/>
</dbReference>
<dbReference type="InterPro" id="IPR009080">
    <property type="entry name" value="tRNAsynth_Ia_anticodon-bd"/>
</dbReference>
<dbReference type="InterPro" id="IPR037118">
    <property type="entry name" value="Val-tRNA_synth_C_sf"/>
</dbReference>
<dbReference type="InterPro" id="IPR019499">
    <property type="entry name" value="Val-tRNA_synth_tRNA-bd"/>
</dbReference>
<dbReference type="InterPro" id="IPR009008">
    <property type="entry name" value="Val/Leu/Ile-tRNA-synth_edit"/>
</dbReference>
<dbReference type="InterPro" id="IPR002303">
    <property type="entry name" value="Valyl-tRNA_ligase"/>
</dbReference>
<dbReference type="NCBIfam" id="NF004349">
    <property type="entry name" value="PRK05729.1"/>
    <property type="match status" value="1"/>
</dbReference>
<dbReference type="NCBIfam" id="TIGR00422">
    <property type="entry name" value="valS"/>
    <property type="match status" value="1"/>
</dbReference>
<dbReference type="PANTHER" id="PTHR11946:SF93">
    <property type="entry name" value="VALINE--TRNA LIGASE, CHLOROPLASTIC_MITOCHONDRIAL 2"/>
    <property type="match status" value="1"/>
</dbReference>
<dbReference type="PANTHER" id="PTHR11946">
    <property type="entry name" value="VALYL-TRNA SYNTHETASES"/>
    <property type="match status" value="1"/>
</dbReference>
<dbReference type="Pfam" id="PF08264">
    <property type="entry name" value="Anticodon_1"/>
    <property type="match status" value="1"/>
</dbReference>
<dbReference type="Pfam" id="PF00133">
    <property type="entry name" value="tRNA-synt_1"/>
    <property type="match status" value="1"/>
</dbReference>
<dbReference type="Pfam" id="PF10458">
    <property type="entry name" value="Val_tRNA-synt_C"/>
    <property type="match status" value="1"/>
</dbReference>
<dbReference type="PRINTS" id="PR00986">
    <property type="entry name" value="TRNASYNTHVAL"/>
</dbReference>
<dbReference type="SUPFAM" id="SSF47323">
    <property type="entry name" value="Anticodon-binding domain of a subclass of class I aminoacyl-tRNA synthetases"/>
    <property type="match status" value="1"/>
</dbReference>
<dbReference type="SUPFAM" id="SSF52374">
    <property type="entry name" value="Nucleotidylyl transferase"/>
    <property type="match status" value="1"/>
</dbReference>
<dbReference type="SUPFAM" id="SSF46589">
    <property type="entry name" value="tRNA-binding arm"/>
    <property type="match status" value="1"/>
</dbReference>
<dbReference type="SUPFAM" id="SSF50677">
    <property type="entry name" value="ValRS/IleRS/LeuRS editing domain"/>
    <property type="match status" value="1"/>
</dbReference>
<dbReference type="PROSITE" id="PS00178">
    <property type="entry name" value="AA_TRNA_LIGASE_I"/>
    <property type="match status" value="1"/>
</dbReference>
<organism>
    <name type="scientific">Vibrio vulnificus (strain CMCP6)</name>
    <dbReference type="NCBI Taxonomy" id="216895"/>
    <lineage>
        <taxon>Bacteria</taxon>
        <taxon>Pseudomonadati</taxon>
        <taxon>Pseudomonadota</taxon>
        <taxon>Gammaproteobacteria</taxon>
        <taxon>Vibrionales</taxon>
        <taxon>Vibrionaceae</taxon>
        <taxon>Vibrio</taxon>
    </lineage>
</organism>
<name>SYV_VIBVU</name>
<evidence type="ECO:0000255" key="1">
    <source>
        <dbReference type="HAMAP-Rule" id="MF_02004"/>
    </source>
</evidence>
<comment type="function">
    <text evidence="1">Catalyzes the attachment of valine to tRNA(Val). As ValRS can inadvertently accommodate and process structurally similar amino acids such as threonine, to avoid such errors, it has a 'posttransfer' editing activity that hydrolyzes mischarged Thr-tRNA(Val) in a tRNA-dependent manner.</text>
</comment>
<comment type="catalytic activity">
    <reaction evidence="1">
        <text>tRNA(Val) + L-valine + ATP = L-valyl-tRNA(Val) + AMP + diphosphate</text>
        <dbReference type="Rhea" id="RHEA:10704"/>
        <dbReference type="Rhea" id="RHEA-COMP:9672"/>
        <dbReference type="Rhea" id="RHEA-COMP:9708"/>
        <dbReference type="ChEBI" id="CHEBI:30616"/>
        <dbReference type="ChEBI" id="CHEBI:33019"/>
        <dbReference type="ChEBI" id="CHEBI:57762"/>
        <dbReference type="ChEBI" id="CHEBI:78442"/>
        <dbReference type="ChEBI" id="CHEBI:78537"/>
        <dbReference type="ChEBI" id="CHEBI:456215"/>
        <dbReference type="EC" id="6.1.1.9"/>
    </reaction>
</comment>
<comment type="subunit">
    <text evidence="1">Monomer.</text>
</comment>
<comment type="subcellular location">
    <subcellularLocation>
        <location evidence="1">Cytoplasm</location>
    </subcellularLocation>
</comment>
<comment type="domain">
    <text evidence="1">ValRS has two distinct active sites: one for aminoacylation and one for editing. The misactivated threonine is translocated from the active site to the editing site.</text>
</comment>
<comment type="domain">
    <text evidence="1">The C-terminal coiled-coil domain is crucial for aminoacylation activity.</text>
</comment>
<comment type="similarity">
    <text evidence="1">Belongs to the class-I aminoacyl-tRNA synthetase family. ValS type 1 subfamily.</text>
</comment>
<feature type="chain" id="PRO_0000224594" description="Valine--tRNA ligase">
    <location>
        <begin position="1"/>
        <end position="951"/>
    </location>
</feature>
<feature type="coiled-coil region" evidence="1">
    <location>
        <begin position="882"/>
        <end position="951"/>
    </location>
</feature>
<feature type="short sequence motif" description="'HIGH' region">
    <location>
        <begin position="42"/>
        <end position="52"/>
    </location>
</feature>
<feature type="short sequence motif" description="'KMSKS' region">
    <location>
        <begin position="554"/>
        <end position="558"/>
    </location>
</feature>
<feature type="binding site" evidence="1">
    <location>
        <position position="557"/>
    </location>
    <ligand>
        <name>ATP</name>
        <dbReference type="ChEBI" id="CHEBI:30616"/>
    </ligand>
</feature>
<protein>
    <recommendedName>
        <fullName evidence="1">Valine--tRNA ligase</fullName>
        <ecNumber evidence="1">6.1.1.9</ecNumber>
    </recommendedName>
    <alternativeName>
        <fullName evidence="1">Valyl-tRNA synthetase</fullName>
        <shortName evidence="1">ValRS</shortName>
    </alternativeName>
</protein>
<reference key="1">
    <citation type="submission" date="2002-12" db="EMBL/GenBank/DDBJ databases">
        <title>Complete genome sequence of Vibrio vulnificus CMCP6.</title>
        <authorList>
            <person name="Rhee J.H."/>
            <person name="Kim S.Y."/>
            <person name="Chung S.S."/>
            <person name="Kim J.J."/>
            <person name="Moon Y.H."/>
            <person name="Jeong H."/>
            <person name="Choy H.E."/>
        </authorList>
    </citation>
    <scope>NUCLEOTIDE SEQUENCE [LARGE SCALE GENOMIC DNA]</scope>
    <source>
        <strain>CMCP6</strain>
    </source>
</reference>
<sequence>MEKTYNPTSIEQDLYKTWEEQGYFKPHGDTSKESYSIMIPPPNVTGSLHMGHAFQDTIMDTLIRCERMKGKNTLWQVGTDHAGIATQMVVERKIAAEEGKTKHDYGREAFIDKIWEWKGESGGTITKQLRRLGASVDWDRERFTMDDGLSNAVQEVFVRLYEDDLIYRGKRLVNWDPKLHTAISDLEVENKDTKGHMWHFRYPLADGVKTADGKDYIVVATTRPETMLGDTGVAVNPEDPRYQDLIGKDIILPIVDRRIPIVGDEHADMEKGTGCVKITPAHDFNDYEVGKRHQLPMINILTFDANIRDAAEVFTTNGEPSDAYGTELPAKYHGMERFAARKAIVAEFDELGLLEEVKDHDLQVPYGDRGGVVIEPMLTDQWYVRTAPLAKTAVEAVENGDIQFVPKQYENMYFSWMRDVQDWCISRQLWWGHRIPAWYDNQGNVYVGRSEEEVRQNHNLESVIELHQDEDVLDTWFSSALWTFGTQGWPEQTDDLKVFHPSDVLVTGFDIIFFWVARMIMMTMHFVKDENGKPQVPFKTVYVTGLIRDENGDKMSKSKGNVLDPIDMIDGIDLESLVEKRTGNMMQPQLAAKIEKNTRKTFENGIEAYGTDALRFTLAAMASTGRDINWDMKRLEGYRNFCNKLWNASRYVMMNTEEQDCGFGAGEIEYSLADKWIESQFELAAKAFNNHIDNYRLDMAANTLYEFIWNQFCDWYLELTKPVLWKGTEAQQRGTRRTLITVLEKTLRLAHPVIPYITETIWQSIKPLVDGVEGETIMLQSLPQYDEANFNQEALDDIEWVKAFITSIRNLRAEYDINPGKPLEVMLKADEKDAARLEANKQVLMSLAKLESVRVLAAGEETPACATALVAKSELMIPMAGLIDKDAELARLDKEVAKTQGEIKRIEGKLGNEGFVAKAPEAVIAKEREKLEGYQETLAKLEEQKATIAAL</sequence>
<proteinExistence type="inferred from homology"/>